<comment type="function">
    <text evidence="1">Located on the platform of the 30S subunit, it bridges several disparate RNA helices of the 16S rRNA. Forms part of the Shine-Dalgarno cleft in the 70S ribosome.</text>
</comment>
<comment type="subunit">
    <text evidence="1">Part of the 30S ribosomal subunit. Interacts with proteins S7 and S18. Binds to IF-3.</text>
</comment>
<comment type="similarity">
    <text evidence="1">Belongs to the universal ribosomal protein uS11 family.</text>
</comment>
<organism>
    <name type="scientific">Salmonella gallinarum (strain 287/91 / NCTC 13346)</name>
    <dbReference type="NCBI Taxonomy" id="550538"/>
    <lineage>
        <taxon>Bacteria</taxon>
        <taxon>Pseudomonadati</taxon>
        <taxon>Pseudomonadota</taxon>
        <taxon>Gammaproteobacteria</taxon>
        <taxon>Enterobacterales</taxon>
        <taxon>Enterobacteriaceae</taxon>
        <taxon>Salmonella</taxon>
    </lineage>
</organism>
<accession>B5RH38</accession>
<gene>
    <name evidence="1" type="primary">rpsK</name>
    <name type="ordered locus">SG4021</name>
</gene>
<name>RS11_SALG2</name>
<feature type="chain" id="PRO_1000141135" description="Small ribosomal subunit protein uS11">
    <location>
        <begin position="1"/>
        <end position="129"/>
    </location>
</feature>
<proteinExistence type="inferred from homology"/>
<keyword id="KW-0687">Ribonucleoprotein</keyword>
<keyword id="KW-0689">Ribosomal protein</keyword>
<keyword id="KW-0694">RNA-binding</keyword>
<keyword id="KW-0699">rRNA-binding</keyword>
<protein>
    <recommendedName>
        <fullName evidence="1">Small ribosomal subunit protein uS11</fullName>
    </recommendedName>
    <alternativeName>
        <fullName evidence="2">30S ribosomal protein S11</fullName>
    </alternativeName>
</protein>
<dbReference type="EMBL" id="AM933173">
    <property type="protein sequence ID" value="CAR39792.1"/>
    <property type="molecule type" value="Genomic_DNA"/>
</dbReference>
<dbReference type="RefSeq" id="WP_001029758.1">
    <property type="nucleotide sequence ID" value="NC_011274.1"/>
</dbReference>
<dbReference type="SMR" id="B5RH38"/>
<dbReference type="GeneID" id="98390419"/>
<dbReference type="KEGG" id="seg:SG4021"/>
<dbReference type="HOGENOM" id="CLU_072439_5_0_6"/>
<dbReference type="Proteomes" id="UP000008321">
    <property type="component" value="Chromosome"/>
</dbReference>
<dbReference type="GO" id="GO:1990904">
    <property type="term" value="C:ribonucleoprotein complex"/>
    <property type="evidence" value="ECO:0007669"/>
    <property type="project" value="UniProtKB-KW"/>
</dbReference>
<dbReference type="GO" id="GO:0005840">
    <property type="term" value="C:ribosome"/>
    <property type="evidence" value="ECO:0007669"/>
    <property type="project" value="UniProtKB-KW"/>
</dbReference>
<dbReference type="GO" id="GO:0019843">
    <property type="term" value="F:rRNA binding"/>
    <property type="evidence" value="ECO:0007669"/>
    <property type="project" value="UniProtKB-UniRule"/>
</dbReference>
<dbReference type="GO" id="GO:0003735">
    <property type="term" value="F:structural constituent of ribosome"/>
    <property type="evidence" value="ECO:0007669"/>
    <property type="project" value="InterPro"/>
</dbReference>
<dbReference type="GO" id="GO:0006412">
    <property type="term" value="P:translation"/>
    <property type="evidence" value="ECO:0007669"/>
    <property type="project" value="UniProtKB-UniRule"/>
</dbReference>
<dbReference type="FunFam" id="3.30.420.80:FF:000001">
    <property type="entry name" value="30S ribosomal protein S11"/>
    <property type="match status" value="1"/>
</dbReference>
<dbReference type="Gene3D" id="3.30.420.80">
    <property type="entry name" value="Ribosomal protein S11"/>
    <property type="match status" value="1"/>
</dbReference>
<dbReference type="HAMAP" id="MF_01310">
    <property type="entry name" value="Ribosomal_uS11"/>
    <property type="match status" value="1"/>
</dbReference>
<dbReference type="InterPro" id="IPR001971">
    <property type="entry name" value="Ribosomal_uS11"/>
</dbReference>
<dbReference type="InterPro" id="IPR019981">
    <property type="entry name" value="Ribosomal_uS11_bac-type"/>
</dbReference>
<dbReference type="InterPro" id="IPR018102">
    <property type="entry name" value="Ribosomal_uS11_CS"/>
</dbReference>
<dbReference type="InterPro" id="IPR036967">
    <property type="entry name" value="Ribosomal_uS11_sf"/>
</dbReference>
<dbReference type="NCBIfam" id="NF003698">
    <property type="entry name" value="PRK05309.1"/>
    <property type="match status" value="1"/>
</dbReference>
<dbReference type="NCBIfam" id="TIGR03632">
    <property type="entry name" value="uS11_bact"/>
    <property type="match status" value="1"/>
</dbReference>
<dbReference type="PANTHER" id="PTHR11759">
    <property type="entry name" value="40S RIBOSOMAL PROTEIN S14/30S RIBOSOMAL PROTEIN S11"/>
    <property type="match status" value="1"/>
</dbReference>
<dbReference type="Pfam" id="PF00411">
    <property type="entry name" value="Ribosomal_S11"/>
    <property type="match status" value="1"/>
</dbReference>
<dbReference type="PIRSF" id="PIRSF002131">
    <property type="entry name" value="Ribosomal_S11"/>
    <property type="match status" value="1"/>
</dbReference>
<dbReference type="SUPFAM" id="SSF53137">
    <property type="entry name" value="Translational machinery components"/>
    <property type="match status" value="1"/>
</dbReference>
<dbReference type="PROSITE" id="PS00054">
    <property type="entry name" value="RIBOSOMAL_S11"/>
    <property type="match status" value="1"/>
</dbReference>
<sequence>MAKAPVRARKRVRKQVSDGVAHIHASFNNTIVTITDRQGNALGWATAGGSGFRGSRKSTPFAAQVAAERCADAVKEYGIKNLEVMVKGPGPGRESTIRALNAAGFRITNITDVTPIPHNGCRPPKKRRV</sequence>
<reference key="1">
    <citation type="journal article" date="2008" name="Genome Res.">
        <title>Comparative genome analysis of Salmonella enteritidis PT4 and Salmonella gallinarum 287/91 provides insights into evolutionary and host adaptation pathways.</title>
        <authorList>
            <person name="Thomson N.R."/>
            <person name="Clayton D.J."/>
            <person name="Windhorst D."/>
            <person name="Vernikos G."/>
            <person name="Davidson S."/>
            <person name="Churcher C."/>
            <person name="Quail M.A."/>
            <person name="Stevens M."/>
            <person name="Jones M.A."/>
            <person name="Watson M."/>
            <person name="Barron A."/>
            <person name="Layton A."/>
            <person name="Pickard D."/>
            <person name="Kingsley R.A."/>
            <person name="Bignell A."/>
            <person name="Clark L."/>
            <person name="Harris B."/>
            <person name="Ormond D."/>
            <person name="Abdellah Z."/>
            <person name="Brooks K."/>
            <person name="Cherevach I."/>
            <person name="Chillingworth T."/>
            <person name="Woodward J."/>
            <person name="Norberczak H."/>
            <person name="Lord A."/>
            <person name="Arrowsmith C."/>
            <person name="Jagels K."/>
            <person name="Moule S."/>
            <person name="Mungall K."/>
            <person name="Saunders M."/>
            <person name="Whitehead S."/>
            <person name="Chabalgoity J.A."/>
            <person name="Maskell D."/>
            <person name="Humphreys T."/>
            <person name="Roberts M."/>
            <person name="Barrow P.A."/>
            <person name="Dougan G."/>
            <person name="Parkhill J."/>
        </authorList>
    </citation>
    <scope>NUCLEOTIDE SEQUENCE [LARGE SCALE GENOMIC DNA]</scope>
    <source>
        <strain>287/91 / NCTC 13346</strain>
    </source>
</reference>
<evidence type="ECO:0000255" key="1">
    <source>
        <dbReference type="HAMAP-Rule" id="MF_01310"/>
    </source>
</evidence>
<evidence type="ECO:0000305" key="2"/>